<gene>
    <name type="primary">gatA</name>
    <name type="ordered locus">Cj1059c</name>
</gene>
<feature type="chain" id="PRO_0000105147" description="Glutamyl-tRNA(Gln) amidotransferase subunit A">
    <location>
        <begin position="1"/>
        <end position="453"/>
    </location>
</feature>
<feature type="active site" description="Charge relay system" evidence="1">
    <location>
        <position position="56"/>
    </location>
</feature>
<feature type="active site" description="Charge relay system" evidence="1">
    <location>
        <position position="131"/>
    </location>
</feature>
<feature type="active site" description="Acyl-ester intermediate" evidence="1">
    <location>
        <position position="155"/>
    </location>
</feature>
<sequence length="453" mass="49284">MITLKEALKYSKEELENLKKELNEKAKKEKKLGAYIEQFLDKDLSVSGEGVPVAIKDNISVKGWELTSASKILQGYIAPYDASAIVNLKANGFSPFGRCNMDEFAMGSSTASSCYGKTLNPLNFERVPGGSSGGSAAAVAGGLALASLGSDTGGSVRQPAAFCGCVGFKPSYGRVSRYGLASYSSSLDQIGVLTQNVEDAAILYDAIAGYDKMDSTSANIEFIKTVPNLNANKKLKIAVIENYVNDADSEVKNALLKTIDMLKANGHEIVYKNLLDSKFDIAAYYIIATAEASANLSRYDGVRYGKRSENIQNLKEMYVNTRSEGFGEEVKRRILLGTFVLSSGYYDAYYIKAQKARAFIKAKYEEILQDCDLIFMPVTPTTAFKFDTQKSPMQTYLEDVYTISVNLAGLGGISVPVAKDKEGLNISAQLICKAYDEQTLLDGALSLEQMIKN</sequence>
<dbReference type="EC" id="6.3.5.7"/>
<dbReference type="EMBL" id="AL111168">
    <property type="protein sequence ID" value="CAL35177.1"/>
    <property type="molecule type" value="Genomic_DNA"/>
</dbReference>
<dbReference type="PIR" id="H81308">
    <property type="entry name" value="H81308"/>
</dbReference>
<dbReference type="RefSeq" id="WP_002853884.1">
    <property type="nucleotide sequence ID" value="NZ_SZUC01000001.1"/>
</dbReference>
<dbReference type="RefSeq" id="YP_002344454.1">
    <property type="nucleotide sequence ID" value="NC_002163.1"/>
</dbReference>
<dbReference type="SMR" id="Q9PNN2"/>
<dbReference type="IntAct" id="Q9PNN2">
    <property type="interactions" value="5"/>
</dbReference>
<dbReference type="STRING" id="192222.Cj1059c"/>
<dbReference type="PaxDb" id="192222-Cj1059c"/>
<dbReference type="EnsemblBacteria" id="CAL35177">
    <property type="protein sequence ID" value="CAL35177"/>
    <property type="gene ID" value="Cj1059c"/>
</dbReference>
<dbReference type="GeneID" id="905351"/>
<dbReference type="KEGG" id="cje:Cj1059c"/>
<dbReference type="PATRIC" id="fig|192222.6.peg.1041"/>
<dbReference type="eggNOG" id="COG0154">
    <property type="taxonomic scope" value="Bacteria"/>
</dbReference>
<dbReference type="HOGENOM" id="CLU_009600_0_3_7"/>
<dbReference type="OrthoDB" id="9811471at2"/>
<dbReference type="Proteomes" id="UP000000799">
    <property type="component" value="Chromosome"/>
</dbReference>
<dbReference type="GO" id="GO:0030956">
    <property type="term" value="C:glutamyl-tRNA(Gln) amidotransferase complex"/>
    <property type="evidence" value="ECO:0007669"/>
    <property type="project" value="InterPro"/>
</dbReference>
<dbReference type="GO" id="GO:0005524">
    <property type="term" value="F:ATP binding"/>
    <property type="evidence" value="ECO:0007669"/>
    <property type="project" value="UniProtKB-KW"/>
</dbReference>
<dbReference type="GO" id="GO:0050567">
    <property type="term" value="F:glutaminyl-tRNA synthase (glutamine-hydrolyzing) activity"/>
    <property type="evidence" value="ECO:0007669"/>
    <property type="project" value="UniProtKB-UniRule"/>
</dbReference>
<dbReference type="GO" id="GO:0006412">
    <property type="term" value="P:translation"/>
    <property type="evidence" value="ECO:0007669"/>
    <property type="project" value="UniProtKB-UniRule"/>
</dbReference>
<dbReference type="Gene3D" id="3.90.1300.10">
    <property type="entry name" value="Amidase signature (AS) domain"/>
    <property type="match status" value="1"/>
</dbReference>
<dbReference type="HAMAP" id="MF_00120">
    <property type="entry name" value="GatA"/>
    <property type="match status" value="1"/>
</dbReference>
<dbReference type="InterPro" id="IPR000120">
    <property type="entry name" value="Amidase"/>
</dbReference>
<dbReference type="InterPro" id="IPR020556">
    <property type="entry name" value="Amidase_CS"/>
</dbReference>
<dbReference type="InterPro" id="IPR023631">
    <property type="entry name" value="Amidase_dom"/>
</dbReference>
<dbReference type="InterPro" id="IPR036928">
    <property type="entry name" value="AS_sf"/>
</dbReference>
<dbReference type="InterPro" id="IPR004412">
    <property type="entry name" value="GatA"/>
</dbReference>
<dbReference type="NCBIfam" id="TIGR00132">
    <property type="entry name" value="gatA"/>
    <property type="match status" value="1"/>
</dbReference>
<dbReference type="PANTHER" id="PTHR11895:SF151">
    <property type="entry name" value="GLUTAMYL-TRNA(GLN) AMIDOTRANSFERASE SUBUNIT A"/>
    <property type="match status" value="1"/>
</dbReference>
<dbReference type="PANTHER" id="PTHR11895">
    <property type="entry name" value="TRANSAMIDASE"/>
    <property type="match status" value="1"/>
</dbReference>
<dbReference type="Pfam" id="PF01425">
    <property type="entry name" value="Amidase"/>
    <property type="match status" value="1"/>
</dbReference>
<dbReference type="SUPFAM" id="SSF75304">
    <property type="entry name" value="Amidase signature (AS) enzymes"/>
    <property type="match status" value="1"/>
</dbReference>
<dbReference type="PROSITE" id="PS00571">
    <property type="entry name" value="AMIDASES"/>
    <property type="match status" value="1"/>
</dbReference>
<comment type="function">
    <text evidence="1">Allows the formation of correctly charged Gln-tRNA(Gln) through the transamidation of misacylated Glu-tRNA(Gln) in organisms which lack glutaminyl-tRNA synthetase. The reaction takes place in the presence of glutamine and ATP through an activated gamma-phospho-Glu-tRNA(Gln) (By similarity).</text>
</comment>
<comment type="catalytic activity">
    <reaction>
        <text>L-glutamyl-tRNA(Gln) + L-glutamine + ATP + H2O = L-glutaminyl-tRNA(Gln) + L-glutamate + ADP + phosphate + H(+)</text>
        <dbReference type="Rhea" id="RHEA:17521"/>
        <dbReference type="Rhea" id="RHEA-COMP:9681"/>
        <dbReference type="Rhea" id="RHEA-COMP:9684"/>
        <dbReference type="ChEBI" id="CHEBI:15377"/>
        <dbReference type="ChEBI" id="CHEBI:15378"/>
        <dbReference type="ChEBI" id="CHEBI:29985"/>
        <dbReference type="ChEBI" id="CHEBI:30616"/>
        <dbReference type="ChEBI" id="CHEBI:43474"/>
        <dbReference type="ChEBI" id="CHEBI:58359"/>
        <dbReference type="ChEBI" id="CHEBI:78520"/>
        <dbReference type="ChEBI" id="CHEBI:78521"/>
        <dbReference type="ChEBI" id="CHEBI:456216"/>
        <dbReference type="EC" id="6.3.5.7"/>
    </reaction>
</comment>
<comment type="subunit">
    <text evidence="1">Heterotrimer of A, B and C subunits.</text>
</comment>
<comment type="similarity">
    <text evidence="2">Belongs to the amidase family. GatA subfamily.</text>
</comment>
<keyword id="KW-0067">ATP-binding</keyword>
<keyword id="KW-0436">Ligase</keyword>
<keyword id="KW-0547">Nucleotide-binding</keyword>
<keyword id="KW-0648">Protein biosynthesis</keyword>
<keyword id="KW-1185">Reference proteome</keyword>
<proteinExistence type="inferred from homology"/>
<evidence type="ECO:0000250" key="1"/>
<evidence type="ECO:0000305" key="2"/>
<reference key="1">
    <citation type="journal article" date="2000" name="Nature">
        <title>The genome sequence of the food-borne pathogen Campylobacter jejuni reveals hypervariable sequences.</title>
        <authorList>
            <person name="Parkhill J."/>
            <person name="Wren B.W."/>
            <person name="Mungall K.L."/>
            <person name="Ketley J.M."/>
            <person name="Churcher C.M."/>
            <person name="Basham D."/>
            <person name="Chillingworth T."/>
            <person name="Davies R.M."/>
            <person name="Feltwell T."/>
            <person name="Holroyd S."/>
            <person name="Jagels K."/>
            <person name="Karlyshev A.V."/>
            <person name="Moule S."/>
            <person name="Pallen M.J."/>
            <person name="Penn C.W."/>
            <person name="Quail M.A."/>
            <person name="Rajandream M.A."/>
            <person name="Rutherford K.M."/>
            <person name="van Vliet A.H.M."/>
            <person name="Whitehead S."/>
            <person name="Barrell B.G."/>
        </authorList>
    </citation>
    <scope>NUCLEOTIDE SEQUENCE [LARGE SCALE GENOMIC DNA]</scope>
    <source>
        <strain>ATCC 700819 / NCTC 11168</strain>
    </source>
</reference>
<organism>
    <name type="scientific">Campylobacter jejuni subsp. jejuni serotype O:2 (strain ATCC 700819 / NCTC 11168)</name>
    <dbReference type="NCBI Taxonomy" id="192222"/>
    <lineage>
        <taxon>Bacteria</taxon>
        <taxon>Pseudomonadati</taxon>
        <taxon>Campylobacterota</taxon>
        <taxon>Epsilonproteobacteria</taxon>
        <taxon>Campylobacterales</taxon>
        <taxon>Campylobacteraceae</taxon>
        <taxon>Campylobacter</taxon>
    </lineage>
</organism>
<accession>Q9PNN2</accession>
<accession>Q0P9J3</accession>
<name>GATA_CAMJE</name>
<protein>
    <recommendedName>
        <fullName>Glutamyl-tRNA(Gln) amidotransferase subunit A</fullName>
        <shortName>Glu-ADT subunit A</shortName>
        <ecNumber>6.3.5.7</ecNumber>
    </recommendedName>
</protein>